<dbReference type="EC" id="2.8.1.8" evidence="1"/>
<dbReference type="EMBL" id="CP000789">
    <property type="protein sequence ID" value="ABU70200.1"/>
    <property type="molecule type" value="Genomic_DNA"/>
</dbReference>
<dbReference type="RefSeq" id="WP_012127184.1">
    <property type="nucleotide sequence ID" value="NC_022269.1"/>
</dbReference>
<dbReference type="SMR" id="A7MY96"/>
<dbReference type="GeneID" id="67378204"/>
<dbReference type="KEGG" id="vha:VIBHAR_01211"/>
<dbReference type="PATRIC" id="fig|338187.25.peg.1419"/>
<dbReference type="UniPathway" id="UPA00538">
    <property type="reaction ID" value="UER00593"/>
</dbReference>
<dbReference type="Proteomes" id="UP000008152">
    <property type="component" value="Chromosome I"/>
</dbReference>
<dbReference type="GO" id="GO:0005737">
    <property type="term" value="C:cytoplasm"/>
    <property type="evidence" value="ECO:0007669"/>
    <property type="project" value="UniProtKB-SubCell"/>
</dbReference>
<dbReference type="GO" id="GO:0051539">
    <property type="term" value="F:4 iron, 4 sulfur cluster binding"/>
    <property type="evidence" value="ECO:0007669"/>
    <property type="project" value="UniProtKB-UniRule"/>
</dbReference>
<dbReference type="GO" id="GO:0016992">
    <property type="term" value="F:lipoate synthase activity"/>
    <property type="evidence" value="ECO:0007669"/>
    <property type="project" value="UniProtKB-UniRule"/>
</dbReference>
<dbReference type="GO" id="GO:0046872">
    <property type="term" value="F:metal ion binding"/>
    <property type="evidence" value="ECO:0007669"/>
    <property type="project" value="UniProtKB-KW"/>
</dbReference>
<dbReference type="CDD" id="cd01335">
    <property type="entry name" value="Radical_SAM"/>
    <property type="match status" value="1"/>
</dbReference>
<dbReference type="FunFam" id="3.20.20.70:FF:000023">
    <property type="entry name" value="Lipoyl synthase"/>
    <property type="match status" value="1"/>
</dbReference>
<dbReference type="Gene3D" id="3.20.20.70">
    <property type="entry name" value="Aldolase class I"/>
    <property type="match status" value="1"/>
</dbReference>
<dbReference type="HAMAP" id="MF_00206">
    <property type="entry name" value="Lipoyl_synth"/>
    <property type="match status" value="1"/>
</dbReference>
<dbReference type="InterPro" id="IPR013785">
    <property type="entry name" value="Aldolase_TIM"/>
</dbReference>
<dbReference type="InterPro" id="IPR006638">
    <property type="entry name" value="Elp3/MiaA/NifB-like_rSAM"/>
</dbReference>
<dbReference type="InterPro" id="IPR031691">
    <property type="entry name" value="LIAS_N"/>
</dbReference>
<dbReference type="InterPro" id="IPR003698">
    <property type="entry name" value="Lipoyl_synth"/>
</dbReference>
<dbReference type="InterPro" id="IPR007197">
    <property type="entry name" value="rSAM"/>
</dbReference>
<dbReference type="NCBIfam" id="TIGR00510">
    <property type="entry name" value="lipA"/>
    <property type="match status" value="1"/>
</dbReference>
<dbReference type="NCBIfam" id="NF004019">
    <property type="entry name" value="PRK05481.1"/>
    <property type="match status" value="1"/>
</dbReference>
<dbReference type="NCBIfam" id="NF009544">
    <property type="entry name" value="PRK12928.1"/>
    <property type="match status" value="1"/>
</dbReference>
<dbReference type="PANTHER" id="PTHR10949">
    <property type="entry name" value="LIPOYL SYNTHASE"/>
    <property type="match status" value="1"/>
</dbReference>
<dbReference type="PANTHER" id="PTHR10949:SF0">
    <property type="entry name" value="LIPOYL SYNTHASE, MITOCHONDRIAL"/>
    <property type="match status" value="1"/>
</dbReference>
<dbReference type="Pfam" id="PF16881">
    <property type="entry name" value="LIAS_N"/>
    <property type="match status" value="1"/>
</dbReference>
<dbReference type="Pfam" id="PF04055">
    <property type="entry name" value="Radical_SAM"/>
    <property type="match status" value="1"/>
</dbReference>
<dbReference type="PIRSF" id="PIRSF005963">
    <property type="entry name" value="Lipoyl_synth"/>
    <property type="match status" value="1"/>
</dbReference>
<dbReference type="SFLD" id="SFLDF00271">
    <property type="entry name" value="lipoyl_synthase"/>
    <property type="match status" value="1"/>
</dbReference>
<dbReference type="SFLD" id="SFLDG01058">
    <property type="entry name" value="lipoyl_synthase_like"/>
    <property type="match status" value="1"/>
</dbReference>
<dbReference type="SMART" id="SM00729">
    <property type="entry name" value="Elp3"/>
    <property type="match status" value="1"/>
</dbReference>
<dbReference type="SUPFAM" id="SSF102114">
    <property type="entry name" value="Radical SAM enzymes"/>
    <property type="match status" value="1"/>
</dbReference>
<dbReference type="PROSITE" id="PS51918">
    <property type="entry name" value="RADICAL_SAM"/>
    <property type="match status" value="1"/>
</dbReference>
<organism>
    <name type="scientific">Vibrio campbellii (strain ATCC BAA-1116)</name>
    <dbReference type="NCBI Taxonomy" id="2902295"/>
    <lineage>
        <taxon>Bacteria</taxon>
        <taxon>Pseudomonadati</taxon>
        <taxon>Pseudomonadota</taxon>
        <taxon>Gammaproteobacteria</taxon>
        <taxon>Vibrionales</taxon>
        <taxon>Vibrionaceae</taxon>
        <taxon>Vibrio</taxon>
    </lineage>
</organism>
<sequence>MSKPIQMEKGVKYRDADKMALIPVKNMPSEQKEVLRKPDWMKIKLPADSQRIQDIKSAMRKNNLHSVCEEASCPNLAECFNHGTATFMILGAICTRRCPFCDVAHGRPLPVEAEEPKKLAKTIADMKLKYVVITSVDRDDLRDGGAEHFANCNREIRELNPHIKIETLVPDFRGRMDVALDLMKDNPPDVFNHNLETAPRLYRKARPGANYKWSLQLLQKFKEQHPNVPTKSGLMMGLGETKEEIVEVLKDLRAHGVTMLTLGQYLAPSRHHLPVERYVPPSEFDELKEIALELGFTHAACGPFVRSSYHADMQAQGIEIK</sequence>
<accession>A7MY96</accession>
<feature type="chain" id="PRO_1000012295" description="Lipoyl synthase">
    <location>
        <begin position="1"/>
        <end position="321"/>
    </location>
</feature>
<feature type="domain" description="Radical SAM core" evidence="2">
    <location>
        <begin position="80"/>
        <end position="297"/>
    </location>
</feature>
<feature type="binding site" evidence="1">
    <location>
        <position position="68"/>
    </location>
    <ligand>
        <name>[4Fe-4S] cluster</name>
        <dbReference type="ChEBI" id="CHEBI:49883"/>
        <label>1</label>
    </ligand>
</feature>
<feature type="binding site" evidence="1">
    <location>
        <position position="73"/>
    </location>
    <ligand>
        <name>[4Fe-4S] cluster</name>
        <dbReference type="ChEBI" id="CHEBI:49883"/>
        <label>1</label>
    </ligand>
</feature>
<feature type="binding site" evidence="1">
    <location>
        <position position="79"/>
    </location>
    <ligand>
        <name>[4Fe-4S] cluster</name>
        <dbReference type="ChEBI" id="CHEBI:49883"/>
        <label>1</label>
    </ligand>
</feature>
<feature type="binding site" evidence="1">
    <location>
        <position position="94"/>
    </location>
    <ligand>
        <name>[4Fe-4S] cluster</name>
        <dbReference type="ChEBI" id="CHEBI:49883"/>
        <label>2</label>
        <note>4Fe-4S-S-AdoMet</note>
    </ligand>
</feature>
<feature type="binding site" evidence="1">
    <location>
        <position position="98"/>
    </location>
    <ligand>
        <name>[4Fe-4S] cluster</name>
        <dbReference type="ChEBI" id="CHEBI:49883"/>
        <label>2</label>
        <note>4Fe-4S-S-AdoMet</note>
    </ligand>
</feature>
<feature type="binding site" evidence="1">
    <location>
        <position position="101"/>
    </location>
    <ligand>
        <name>[4Fe-4S] cluster</name>
        <dbReference type="ChEBI" id="CHEBI:49883"/>
        <label>2</label>
        <note>4Fe-4S-S-AdoMet</note>
    </ligand>
</feature>
<feature type="binding site" evidence="1">
    <location>
        <position position="308"/>
    </location>
    <ligand>
        <name>[4Fe-4S] cluster</name>
        <dbReference type="ChEBI" id="CHEBI:49883"/>
        <label>1</label>
    </ligand>
</feature>
<gene>
    <name evidence="1" type="primary">lipA</name>
    <name type="ordered locus">VIBHAR_01211</name>
</gene>
<name>LIPA_VIBC1</name>
<keyword id="KW-0004">4Fe-4S</keyword>
<keyword id="KW-0963">Cytoplasm</keyword>
<keyword id="KW-0408">Iron</keyword>
<keyword id="KW-0411">Iron-sulfur</keyword>
<keyword id="KW-0479">Metal-binding</keyword>
<keyword id="KW-0949">S-adenosyl-L-methionine</keyword>
<keyword id="KW-0808">Transferase</keyword>
<reference key="1">
    <citation type="submission" date="2007-08" db="EMBL/GenBank/DDBJ databases">
        <authorList>
            <consortium name="The Vibrio harveyi Genome Sequencing Project"/>
            <person name="Bassler B."/>
            <person name="Clifton S.W."/>
            <person name="Fulton L."/>
            <person name="Delehaunty K."/>
            <person name="Fronick C."/>
            <person name="Harrison M."/>
            <person name="Markivic C."/>
            <person name="Fulton R."/>
            <person name="Tin-Wollam A.-M."/>
            <person name="Shah N."/>
            <person name="Pepin K."/>
            <person name="Nash W."/>
            <person name="Thiruvilangam P."/>
            <person name="Bhonagiri V."/>
            <person name="Waters C."/>
            <person name="Tu K.C."/>
            <person name="Irgon J."/>
            <person name="Wilson R.K."/>
        </authorList>
    </citation>
    <scope>NUCLEOTIDE SEQUENCE [LARGE SCALE GENOMIC DNA]</scope>
    <source>
        <strain>ATCC BAA-1116 / BB120</strain>
    </source>
</reference>
<evidence type="ECO:0000255" key="1">
    <source>
        <dbReference type="HAMAP-Rule" id="MF_00206"/>
    </source>
</evidence>
<evidence type="ECO:0000255" key="2">
    <source>
        <dbReference type="PROSITE-ProRule" id="PRU01266"/>
    </source>
</evidence>
<comment type="function">
    <text evidence="1">Catalyzes the radical-mediated insertion of two sulfur atoms into the C-6 and C-8 positions of the octanoyl moiety bound to the lipoyl domains of lipoate-dependent enzymes, thereby converting the octanoylated domains into lipoylated derivatives.</text>
</comment>
<comment type="catalytic activity">
    <reaction evidence="1">
        <text>[[Fe-S] cluster scaffold protein carrying a second [4Fe-4S](2+) cluster] + N(6)-octanoyl-L-lysyl-[protein] + 2 oxidized [2Fe-2S]-[ferredoxin] + 2 S-adenosyl-L-methionine + 4 H(+) = [[Fe-S] cluster scaffold protein] + N(6)-[(R)-dihydrolipoyl]-L-lysyl-[protein] + 4 Fe(3+) + 2 hydrogen sulfide + 2 5'-deoxyadenosine + 2 L-methionine + 2 reduced [2Fe-2S]-[ferredoxin]</text>
        <dbReference type="Rhea" id="RHEA:16585"/>
        <dbReference type="Rhea" id="RHEA-COMP:9928"/>
        <dbReference type="Rhea" id="RHEA-COMP:10000"/>
        <dbReference type="Rhea" id="RHEA-COMP:10001"/>
        <dbReference type="Rhea" id="RHEA-COMP:10475"/>
        <dbReference type="Rhea" id="RHEA-COMP:14568"/>
        <dbReference type="Rhea" id="RHEA-COMP:14569"/>
        <dbReference type="ChEBI" id="CHEBI:15378"/>
        <dbReference type="ChEBI" id="CHEBI:17319"/>
        <dbReference type="ChEBI" id="CHEBI:29034"/>
        <dbReference type="ChEBI" id="CHEBI:29919"/>
        <dbReference type="ChEBI" id="CHEBI:33722"/>
        <dbReference type="ChEBI" id="CHEBI:33737"/>
        <dbReference type="ChEBI" id="CHEBI:33738"/>
        <dbReference type="ChEBI" id="CHEBI:57844"/>
        <dbReference type="ChEBI" id="CHEBI:59789"/>
        <dbReference type="ChEBI" id="CHEBI:78809"/>
        <dbReference type="ChEBI" id="CHEBI:83100"/>
        <dbReference type="EC" id="2.8.1.8"/>
    </reaction>
</comment>
<comment type="cofactor">
    <cofactor evidence="1">
        <name>[4Fe-4S] cluster</name>
        <dbReference type="ChEBI" id="CHEBI:49883"/>
    </cofactor>
    <text evidence="1">Binds 2 [4Fe-4S] clusters per subunit. One cluster is coordinated with 3 cysteines and an exchangeable S-adenosyl-L-methionine.</text>
</comment>
<comment type="pathway">
    <text evidence="1">Protein modification; protein lipoylation via endogenous pathway; protein N(6)-(lipoyl)lysine from octanoyl-[acyl-carrier-protein]: step 2/2.</text>
</comment>
<comment type="subcellular location">
    <subcellularLocation>
        <location evidence="1">Cytoplasm</location>
    </subcellularLocation>
</comment>
<comment type="similarity">
    <text evidence="1">Belongs to the radical SAM superfamily. Lipoyl synthase family.</text>
</comment>
<proteinExistence type="inferred from homology"/>
<protein>
    <recommendedName>
        <fullName evidence="1">Lipoyl synthase</fullName>
        <ecNumber evidence="1">2.8.1.8</ecNumber>
    </recommendedName>
    <alternativeName>
        <fullName evidence="1">Lip-syn</fullName>
        <shortName evidence="1">LS</shortName>
    </alternativeName>
    <alternativeName>
        <fullName evidence="1">Lipoate synthase</fullName>
    </alternativeName>
    <alternativeName>
        <fullName evidence="1">Lipoic acid synthase</fullName>
    </alternativeName>
    <alternativeName>
        <fullName evidence="1">Sulfur insertion protein LipA</fullName>
    </alternativeName>
</protein>